<sequence length="917" mass="101714">MGHDLADIKKSFEASLPGYVEKKDPKSILPQPGKRNILITAALPYVNNVPHLGNIIGCVLSADVFARYCNLRGHQTFYVGGTDEYGTATETKALQEGCTPRELCDKYHAIHKGIYEWFGIDFSHFGRTTTDHQTEICQDMFLKLHKNGYTSSQSVDQLYCNQCEKFLADRFVTGTCPMCAYDDARGDQCDGCGKLINAVDLKDAKCHMCKATPEVKQSTHIFLSLDKLQQKTTEHLDRELAKEDNRWSSNAVGITKAWMKLGLDPRCITRDLKWGTAVPLDGFEKKVFYVWFDAPIGYLSITKCVLGDNWTKWWKNPENVELFNFVGKDNVAFHAVMFPCSQLGANDNYTVVNNLCATEYLNYEDTKFSKSRGTGIFGDAAQGTEIPADIWRFYLLYMRPESQDTAFSWDDFVLKVNSELLNNLGNFINRALSFVANSFGGVVPEMNLTNDDAEVLSEIHNECMQWDKQFDGVHLKDAVKTILNVSRLGNQYMQAQTPWVLMKKDEEGKKRAGTIIGVAANIAYHVSVLLYPIMPTISATIREQCGLPALPLFTPFPICYLKAGHKIGQPSPLFQKLDPAQIAEFKAKFGGSQDAQSSAPKTAEKPKQQKKQAPTKDKKGDKKMASTAAFVELEQGAKVISQLIAQNLKKFDQAKALFTRNQLQRLDGENKQLTIDVKTLQHQLIELETAAGIKQVPKPVVSCTPTPTSTPASGIITEAPKKEAPSTPAPSEPKKAKEQKKGKGGAAAAPVDDTIDVGRLDMRVGRIIKCEKHPDADALYVEQIDVGESAPRTVVSGLVRHVPLDQMQNRLVVVLCNLKPAKMRGVESRAMVMCASSPDKVEIMEVPADSKPGTPVVCPPYTHRPDEQLNPKKKIWETVAEDLKVSAEGFAEWKGQPLLIGSESKMTAPTLRGVHVK</sequence>
<accession>Q20970</accession>
<proteinExistence type="inferred from homology"/>
<organism>
    <name type="scientific">Caenorhabditis elegans</name>
    <dbReference type="NCBI Taxonomy" id="6239"/>
    <lineage>
        <taxon>Eukaryota</taxon>
        <taxon>Metazoa</taxon>
        <taxon>Ecdysozoa</taxon>
        <taxon>Nematoda</taxon>
        <taxon>Chromadorea</taxon>
        <taxon>Rhabditida</taxon>
        <taxon>Rhabditina</taxon>
        <taxon>Rhabditomorpha</taxon>
        <taxon>Rhabditoidea</taxon>
        <taxon>Rhabditidae</taxon>
        <taxon>Peloderinae</taxon>
        <taxon>Caenorhabditis</taxon>
    </lineage>
</organism>
<keyword id="KW-0030">Aminoacyl-tRNA synthetase</keyword>
<keyword id="KW-0067">ATP-binding</keyword>
<keyword id="KW-0963">Cytoplasm</keyword>
<keyword id="KW-0436">Ligase</keyword>
<keyword id="KW-0547">Nucleotide-binding</keyword>
<keyword id="KW-0648">Protein biosynthesis</keyword>
<keyword id="KW-1185">Reference proteome</keyword>
<keyword id="KW-0694">RNA-binding</keyword>
<keyword id="KW-0820">tRNA-binding</keyword>
<evidence type="ECO:0000250" key="1"/>
<evidence type="ECO:0000256" key="2">
    <source>
        <dbReference type="SAM" id="MobiDB-lite"/>
    </source>
</evidence>
<evidence type="ECO:0000305" key="3"/>
<evidence type="ECO:0000312" key="4">
    <source>
        <dbReference type="WormBase" id="F58B3.5a"/>
    </source>
</evidence>
<dbReference type="EC" id="6.1.1.10"/>
<dbReference type="EMBL" id="Z73427">
    <property type="protein sequence ID" value="CAA97803.1"/>
    <property type="molecule type" value="Genomic_DNA"/>
</dbReference>
<dbReference type="PIR" id="T22898">
    <property type="entry name" value="T22898"/>
</dbReference>
<dbReference type="RefSeq" id="NP_001255570.1">
    <property type="nucleotide sequence ID" value="NM_001268641.4"/>
</dbReference>
<dbReference type="SMR" id="Q20970"/>
<dbReference type="BioGRID" id="43186">
    <property type="interactions" value="38"/>
</dbReference>
<dbReference type="FunCoup" id="Q20970">
    <property type="interactions" value="2727"/>
</dbReference>
<dbReference type="STRING" id="6239.F58B3.5a.1"/>
<dbReference type="iPTMnet" id="Q20970"/>
<dbReference type="PaxDb" id="6239-F58B3.5a"/>
<dbReference type="PeptideAtlas" id="Q20970"/>
<dbReference type="EnsemblMetazoa" id="F58B3.5a.1">
    <property type="protein sequence ID" value="F58B3.5a.1"/>
    <property type="gene ID" value="WBGene00003415"/>
</dbReference>
<dbReference type="GeneID" id="178089"/>
<dbReference type="KEGG" id="cel:CELE_F58B3.5"/>
<dbReference type="UCSC" id="F58B3.5">
    <property type="organism name" value="c. elegans"/>
</dbReference>
<dbReference type="AGR" id="WB:WBGene00003415"/>
<dbReference type="CTD" id="178089"/>
<dbReference type="WormBase" id="F58B3.5a">
    <property type="protein sequence ID" value="CE06007"/>
    <property type="gene ID" value="WBGene00003415"/>
    <property type="gene designation" value="mars-1"/>
</dbReference>
<dbReference type="eggNOG" id="KOG1247">
    <property type="taxonomic scope" value="Eukaryota"/>
</dbReference>
<dbReference type="eggNOG" id="KOG2241">
    <property type="taxonomic scope" value="Eukaryota"/>
</dbReference>
<dbReference type="GeneTree" id="ENSGT00550000075017"/>
<dbReference type="HOGENOM" id="CLU_009710_1_0_1"/>
<dbReference type="InParanoid" id="Q20970"/>
<dbReference type="OMA" id="HLNTTEY"/>
<dbReference type="OrthoDB" id="5844513at2759"/>
<dbReference type="PhylomeDB" id="Q20970"/>
<dbReference type="PRO" id="PR:Q20970"/>
<dbReference type="Proteomes" id="UP000001940">
    <property type="component" value="Chromosome IV"/>
</dbReference>
<dbReference type="Bgee" id="WBGene00003415">
    <property type="expression patterns" value="Expressed in germ line (C elegans) and 4 other cell types or tissues"/>
</dbReference>
<dbReference type="ExpressionAtlas" id="Q20970">
    <property type="expression patterns" value="baseline and differential"/>
</dbReference>
<dbReference type="GO" id="GO:0017101">
    <property type="term" value="C:aminoacyl-tRNA synthetase multienzyme complex"/>
    <property type="evidence" value="ECO:0000318"/>
    <property type="project" value="GO_Central"/>
</dbReference>
<dbReference type="GO" id="GO:0005829">
    <property type="term" value="C:cytosol"/>
    <property type="evidence" value="ECO:0000318"/>
    <property type="project" value="GO_Central"/>
</dbReference>
<dbReference type="GO" id="GO:0005524">
    <property type="term" value="F:ATP binding"/>
    <property type="evidence" value="ECO:0007669"/>
    <property type="project" value="UniProtKB-KW"/>
</dbReference>
<dbReference type="GO" id="GO:0004825">
    <property type="term" value="F:methionine-tRNA ligase activity"/>
    <property type="evidence" value="ECO:0000318"/>
    <property type="project" value="GO_Central"/>
</dbReference>
<dbReference type="GO" id="GO:0000049">
    <property type="term" value="F:tRNA binding"/>
    <property type="evidence" value="ECO:0007669"/>
    <property type="project" value="UniProtKB-KW"/>
</dbReference>
<dbReference type="GO" id="GO:0006431">
    <property type="term" value="P:methionyl-tRNA aminoacylation"/>
    <property type="evidence" value="ECO:0000318"/>
    <property type="project" value="GO_Central"/>
</dbReference>
<dbReference type="CDD" id="cd07957">
    <property type="entry name" value="Anticodon_Ia_Met"/>
    <property type="match status" value="1"/>
</dbReference>
<dbReference type="CDD" id="cd00814">
    <property type="entry name" value="MetRS_core"/>
    <property type="match status" value="1"/>
</dbReference>
<dbReference type="CDD" id="cd02799">
    <property type="entry name" value="tRNA_bind_EMAP-II_like"/>
    <property type="match status" value="1"/>
</dbReference>
<dbReference type="FunFam" id="2.20.28.20:FF:000001">
    <property type="entry name" value="Methionine--tRNA ligase"/>
    <property type="match status" value="1"/>
</dbReference>
<dbReference type="FunFam" id="1.10.730.10:FF:000031">
    <property type="entry name" value="Putative Methionyl-tRNA synthetase"/>
    <property type="match status" value="1"/>
</dbReference>
<dbReference type="FunFam" id="2.40.50.140:FF:000047">
    <property type="entry name" value="tyrosine--tRNA ligase, cytoplasmic isoform X2"/>
    <property type="match status" value="1"/>
</dbReference>
<dbReference type="Gene3D" id="3.40.50.620">
    <property type="entry name" value="HUPs"/>
    <property type="match status" value="1"/>
</dbReference>
<dbReference type="Gene3D" id="1.10.730.10">
    <property type="entry name" value="Isoleucyl-tRNA Synthetase, Domain 1"/>
    <property type="match status" value="1"/>
</dbReference>
<dbReference type="Gene3D" id="2.20.28.20">
    <property type="entry name" value="Methionyl-tRNA synthetase, Zn-domain"/>
    <property type="match status" value="1"/>
</dbReference>
<dbReference type="Gene3D" id="2.40.50.140">
    <property type="entry name" value="Nucleic acid-binding proteins"/>
    <property type="match status" value="1"/>
</dbReference>
<dbReference type="HAMAP" id="MF_00098">
    <property type="entry name" value="Met_tRNA_synth_type1"/>
    <property type="match status" value="1"/>
</dbReference>
<dbReference type="InterPro" id="IPR001412">
    <property type="entry name" value="aa-tRNA-synth_I_CS"/>
</dbReference>
<dbReference type="InterPro" id="IPR041872">
    <property type="entry name" value="Anticodon_Met"/>
</dbReference>
<dbReference type="InterPro" id="IPR023458">
    <property type="entry name" value="Met-tRNA_ligase_1"/>
</dbReference>
<dbReference type="InterPro" id="IPR014758">
    <property type="entry name" value="Met-tRNA_synth"/>
</dbReference>
<dbReference type="InterPro" id="IPR015413">
    <property type="entry name" value="Methionyl/Leucyl_tRNA_Synth"/>
</dbReference>
<dbReference type="InterPro" id="IPR033911">
    <property type="entry name" value="MetRS_core"/>
</dbReference>
<dbReference type="InterPro" id="IPR029038">
    <property type="entry name" value="MetRS_Zn"/>
</dbReference>
<dbReference type="InterPro" id="IPR012340">
    <property type="entry name" value="NA-bd_OB-fold"/>
</dbReference>
<dbReference type="InterPro" id="IPR014729">
    <property type="entry name" value="Rossmann-like_a/b/a_fold"/>
</dbReference>
<dbReference type="InterPro" id="IPR002547">
    <property type="entry name" value="tRNA-bd_dom"/>
</dbReference>
<dbReference type="InterPro" id="IPR009080">
    <property type="entry name" value="tRNAsynth_Ia_anticodon-bd"/>
</dbReference>
<dbReference type="NCBIfam" id="TIGR00398">
    <property type="entry name" value="metG"/>
    <property type="match status" value="1"/>
</dbReference>
<dbReference type="NCBIfam" id="NF001100">
    <property type="entry name" value="PRK00133.1"/>
    <property type="match status" value="1"/>
</dbReference>
<dbReference type="PANTHER" id="PTHR45765">
    <property type="entry name" value="METHIONINE--TRNA LIGASE"/>
    <property type="match status" value="1"/>
</dbReference>
<dbReference type="PANTHER" id="PTHR45765:SF1">
    <property type="entry name" value="METHIONINE--TRNA LIGASE, CYTOPLASMIC"/>
    <property type="match status" value="1"/>
</dbReference>
<dbReference type="Pfam" id="PF19303">
    <property type="entry name" value="Anticodon_3"/>
    <property type="match status" value="1"/>
</dbReference>
<dbReference type="Pfam" id="PF09334">
    <property type="entry name" value="tRNA-synt_1g"/>
    <property type="match status" value="1"/>
</dbReference>
<dbReference type="Pfam" id="PF01588">
    <property type="entry name" value="tRNA_bind"/>
    <property type="match status" value="1"/>
</dbReference>
<dbReference type="PRINTS" id="PR01041">
    <property type="entry name" value="TRNASYNTHMET"/>
</dbReference>
<dbReference type="SUPFAM" id="SSF47323">
    <property type="entry name" value="Anticodon-binding domain of a subclass of class I aminoacyl-tRNA synthetases"/>
    <property type="match status" value="1"/>
</dbReference>
<dbReference type="SUPFAM" id="SSF57770">
    <property type="entry name" value="Methionyl-tRNA synthetase (MetRS), Zn-domain"/>
    <property type="match status" value="1"/>
</dbReference>
<dbReference type="SUPFAM" id="SSF50249">
    <property type="entry name" value="Nucleic acid-binding proteins"/>
    <property type="match status" value="1"/>
</dbReference>
<dbReference type="SUPFAM" id="SSF52374">
    <property type="entry name" value="Nucleotidylyl transferase"/>
    <property type="match status" value="1"/>
</dbReference>
<dbReference type="PROSITE" id="PS00178">
    <property type="entry name" value="AA_TRNA_LIGASE_I"/>
    <property type="match status" value="1"/>
</dbReference>
<dbReference type="PROSITE" id="PS50886">
    <property type="entry name" value="TRBD"/>
    <property type="match status" value="1"/>
</dbReference>
<name>SYMC_CAEEL</name>
<protein>
    <recommendedName>
        <fullName>Methionine--tRNA ligase, cytoplasmic</fullName>
        <ecNumber>6.1.1.10</ecNumber>
    </recommendedName>
    <alternativeName>
        <fullName>Methionyl-tRNA synthetase</fullName>
        <shortName>MetRS</shortName>
    </alternativeName>
</protein>
<gene>
    <name evidence="4" type="primary">mars-1</name>
    <name evidence="4" type="synonym">mrs-1</name>
    <name evidence="4" type="ORF">F58B3.5</name>
</gene>
<feature type="chain" id="PRO_0000139265" description="Methionine--tRNA ligase, cytoplasmic">
    <location>
        <begin position="1"/>
        <end position="917"/>
    </location>
</feature>
<feature type="domain" description="tRNA-binding">
    <location>
        <begin position="756"/>
        <end position="857"/>
    </location>
</feature>
<feature type="region of interest" description="Disordered" evidence="2">
    <location>
        <begin position="591"/>
        <end position="623"/>
    </location>
</feature>
<feature type="region of interest" description="Disordered" evidence="2">
    <location>
        <begin position="702"/>
        <end position="749"/>
    </location>
</feature>
<feature type="short sequence motif" description="'HIGH' region">
    <location>
        <begin position="44"/>
        <end position="54"/>
    </location>
</feature>
<feature type="short sequence motif" description="'KMSKS' region">
    <location>
        <begin position="367"/>
        <end position="371"/>
    </location>
</feature>
<feature type="compositionally biased region" description="Basic and acidic residues" evidence="2">
    <location>
        <begin position="614"/>
        <end position="623"/>
    </location>
</feature>
<feature type="compositionally biased region" description="Low complexity" evidence="2">
    <location>
        <begin position="702"/>
        <end position="713"/>
    </location>
</feature>
<feature type="compositionally biased region" description="Basic and acidic residues" evidence="2">
    <location>
        <begin position="732"/>
        <end position="741"/>
    </location>
</feature>
<feature type="binding site" evidence="1">
    <location>
        <position position="370"/>
    </location>
    <ligand>
        <name>ATP</name>
        <dbReference type="ChEBI" id="CHEBI:30616"/>
    </ligand>
</feature>
<comment type="catalytic activity">
    <reaction>
        <text>tRNA(Met) + L-methionine + ATP = L-methionyl-tRNA(Met) + AMP + diphosphate</text>
        <dbReference type="Rhea" id="RHEA:13481"/>
        <dbReference type="Rhea" id="RHEA-COMP:9667"/>
        <dbReference type="Rhea" id="RHEA-COMP:9698"/>
        <dbReference type="ChEBI" id="CHEBI:30616"/>
        <dbReference type="ChEBI" id="CHEBI:33019"/>
        <dbReference type="ChEBI" id="CHEBI:57844"/>
        <dbReference type="ChEBI" id="CHEBI:78442"/>
        <dbReference type="ChEBI" id="CHEBI:78530"/>
        <dbReference type="ChEBI" id="CHEBI:456215"/>
        <dbReference type="EC" id="6.1.1.10"/>
    </reaction>
</comment>
<comment type="subcellular location">
    <subcellularLocation>
        <location evidence="1">Cytoplasm</location>
    </subcellularLocation>
</comment>
<comment type="similarity">
    <text evidence="3">Belongs to the class-I aminoacyl-tRNA synthetase family.</text>
</comment>
<reference key="1">
    <citation type="journal article" date="1998" name="Science">
        <title>Genome sequence of the nematode C. elegans: a platform for investigating biology.</title>
        <authorList>
            <consortium name="The C. elegans sequencing consortium"/>
        </authorList>
    </citation>
    <scope>NUCLEOTIDE SEQUENCE [LARGE SCALE GENOMIC DNA]</scope>
    <source>
        <strain>Bristol N2</strain>
    </source>
</reference>